<gene>
    <name type="ordered locus">LBUL_0609</name>
</gene>
<sequence length="243" mass="26583">MSGHSKWHNIQGRKNAQDAKRGKVFQKLSREIYMAAKSGGPDPLGNPRLRLAVDKARAANMPKDNIQRAIKKAEGNSDEHYDEVTYEGYAPGGVAILVEALTDNKNRTASSVRVAFTRNGGSLGATGSVAYMFDRKGYIVIDRSTTDADEDQMLMDVMEAGGDDLQTSDDAYEIYTDAKSFTAVRDALEKAGYQLAVSELTMVPQNTTPVPADKKEQFEKLVDALEDDDDVSNVYTAAADEEE</sequence>
<comment type="subcellular location">
    <subcellularLocation>
        <location evidence="1">Cytoplasm</location>
    </subcellularLocation>
</comment>
<comment type="similarity">
    <text evidence="1">Belongs to the TACO1 family.</text>
</comment>
<name>Y609_LACDB</name>
<dbReference type="EMBL" id="CP000412">
    <property type="protein sequence ID" value="ABJ58239.1"/>
    <property type="molecule type" value="Genomic_DNA"/>
</dbReference>
<dbReference type="RefSeq" id="WP_003622770.1">
    <property type="nucleotide sequence ID" value="NC_008529.1"/>
</dbReference>
<dbReference type="SMR" id="Q04BD3"/>
<dbReference type="KEGG" id="lbu:LBUL_0609"/>
<dbReference type="HOGENOM" id="CLU_062974_3_0_9"/>
<dbReference type="BioCyc" id="LDEL321956:LBUL_RS02900-MONOMER"/>
<dbReference type="GO" id="GO:0005829">
    <property type="term" value="C:cytosol"/>
    <property type="evidence" value="ECO:0007669"/>
    <property type="project" value="TreeGrafter"/>
</dbReference>
<dbReference type="GO" id="GO:0003677">
    <property type="term" value="F:DNA binding"/>
    <property type="evidence" value="ECO:0007669"/>
    <property type="project" value="UniProtKB-UniRule"/>
</dbReference>
<dbReference type="GO" id="GO:0006355">
    <property type="term" value="P:regulation of DNA-templated transcription"/>
    <property type="evidence" value="ECO:0007669"/>
    <property type="project" value="UniProtKB-UniRule"/>
</dbReference>
<dbReference type="FunFam" id="1.10.10.200:FF:000002">
    <property type="entry name" value="Probable transcriptional regulatory protein CLM62_37755"/>
    <property type="match status" value="1"/>
</dbReference>
<dbReference type="FunFam" id="3.30.70.980:FF:000002">
    <property type="entry name" value="Probable transcriptional regulatory protein YebC"/>
    <property type="match status" value="1"/>
</dbReference>
<dbReference type="Gene3D" id="1.10.10.200">
    <property type="match status" value="1"/>
</dbReference>
<dbReference type="Gene3D" id="3.30.70.980">
    <property type="match status" value="2"/>
</dbReference>
<dbReference type="HAMAP" id="MF_00693">
    <property type="entry name" value="Transcrip_reg_TACO1"/>
    <property type="match status" value="1"/>
</dbReference>
<dbReference type="InterPro" id="IPR017856">
    <property type="entry name" value="Integrase-like_N"/>
</dbReference>
<dbReference type="InterPro" id="IPR048300">
    <property type="entry name" value="TACO1_YebC-like_2nd/3rd_dom"/>
</dbReference>
<dbReference type="InterPro" id="IPR049083">
    <property type="entry name" value="TACO1_YebC_N"/>
</dbReference>
<dbReference type="InterPro" id="IPR002876">
    <property type="entry name" value="Transcrip_reg_TACO1-like"/>
</dbReference>
<dbReference type="InterPro" id="IPR026564">
    <property type="entry name" value="Transcrip_reg_TACO1-like_dom3"/>
</dbReference>
<dbReference type="InterPro" id="IPR029072">
    <property type="entry name" value="YebC-like"/>
</dbReference>
<dbReference type="NCBIfam" id="NF001030">
    <property type="entry name" value="PRK00110.1"/>
    <property type="match status" value="1"/>
</dbReference>
<dbReference type="NCBIfam" id="NF009044">
    <property type="entry name" value="PRK12378.1"/>
    <property type="match status" value="1"/>
</dbReference>
<dbReference type="NCBIfam" id="TIGR01033">
    <property type="entry name" value="YebC/PmpR family DNA-binding transcriptional regulator"/>
    <property type="match status" value="1"/>
</dbReference>
<dbReference type="PANTHER" id="PTHR12532:SF6">
    <property type="entry name" value="TRANSCRIPTIONAL REGULATORY PROTEIN YEBC-RELATED"/>
    <property type="match status" value="1"/>
</dbReference>
<dbReference type="PANTHER" id="PTHR12532">
    <property type="entry name" value="TRANSLATIONAL ACTIVATOR OF CYTOCHROME C OXIDASE 1"/>
    <property type="match status" value="1"/>
</dbReference>
<dbReference type="Pfam" id="PF20772">
    <property type="entry name" value="TACO1_YebC_N"/>
    <property type="match status" value="1"/>
</dbReference>
<dbReference type="Pfam" id="PF01709">
    <property type="entry name" value="Transcrip_reg"/>
    <property type="match status" value="1"/>
</dbReference>
<dbReference type="SUPFAM" id="SSF75625">
    <property type="entry name" value="YebC-like"/>
    <property type="match status" value="1"/>
</dbReference>
<protein>
    <recommendedName>
        <fullName evidence="1">Probable transcriptional regulatory protein LBUL_0609</fullName>
    </recommendedName>
</protein>
<organism>
    <name type="scientific">Lactobacillus delbrueckii subsp. bulgaricus (strain ATCC BAA-365 / Lb-18)</name>
    <dbReference type="NCBI Taxonomy" id="321956"/>
    <lineage>
        <taxon>Bacteria</taxon>
        <taxon>Bacillati</taxon>
        <taxon>Bacillota</taxon>
        <taxon>Bacilli</taxon>
        <taxon>Lactobacillales</taxon>
        <taxon>Lactobacillaceae</taxon>
        <taxon>Lactobacillus</taxon>
    </lineage>
</organism>
<proteinExistence type="inferred from homology"/>
<accession>Q04BD3</accession>
<feature type="chain" id="PRO_1000045325" description="Probable transcriptional regulatory protein LBUL_0609">
    <location>
        <begin position="1"/>
        <end position="243"/>
    </location>
</feature>
<feature type="region of interest" description="Disordered" evidence="2">
    <location>
        <begin position="1"/>
        <end position="22"/>
    </location>
</feature>
<reference key="1">
    <citation type="journal article" date="2006" name="Proc. Natl. Acad. Sci. U.S.A.">
        <title>Comparative genomics of the lactic acid bacteria.</title>
        <authorList>
            <person name="Makarova K.S."/>
            <person name="Slesarev A."/>
            <person name="Wolf Y.I."/>
            <person name="Sorokin A."/>
            <person name="Mirkin B."/>
            <person name="Koonin E.V."/>
            <person name="Pavlov A."/>
            <person name="Pavlova N."/>
            <person name="Karamychev V."/>
            <person name="Polouchine N."/>
            <person name="Shakhova V."/>
            <person name="Grigoriev I."/>
            <person name="Lou Y."/>
            <person name="Rohksar D."/>
            <person name="Lucas S."/>
            <person name="Huang K."/>
            <person name="Goodstein D.M."/>
            <person name="Hawkins T."/>
            <person name="Plengvidhya V."/>
            <person name="Welker D."/>
            <person name="Hughes J."/>
            <person name="Goh Y."/>
            <person name="Benson A."/>
            <person name="Baldwin K."/>
            <person name="Lee J.-H."/>
            <person name="Diaz-Muniz I."/>
            <person name="Dosti B."/>
            <person name="Smeianov V."/>
            <person name="Wechter W."/>
            <person name="Barabote R."/>
            <person name="Lorca G."/>
            <person name="Altermann E."/>
            <person name="Barrangou R."/>
            <person name="Ganesan B."/>
            <person name="Xie Y."/>
            <person name="Rawsthorne H."/>
            <person name="Tamir D."/>
            <person name="Parker C."/>
            <person name="Breidt F."/>
            <person name="Broadbent J.R."/>
            <person name="Hutkins R."/>
            <person name="O'Sullivan D."/>
            <person name="Steele J."/>
            <person name="Unlu G."/>
            <person name="Saier M.H. Jr."/>
            <person name="Klaenhammer T."/>
            <person name="Richardson P."/>
            <person name="Kozyavkin S."/>
            <person name="Weimer B.C."/>
            <person name="Mills D.A."/>
        </authorList>
    </citation>
    <scope>NUCLEOTIDE SEQUENCE [LARGE SCALE GENOMIC DNA]</scope>
    <source>
        <strain>ATCC BAA-365 / Lb-18</strain>
    </source>
</reference>
<evidence type="ECO:0000255" key="1">
    <source>
        <dbReference type="HAMAP-Rule" id="MF_00693"/>
    </source>
</evidence>
<evidence type="ECO:0000256" key="2">
    <source>
        <dbReference type="SAM" id="MobiDB-lite"/>
    </source>
</evidence>
<keyword id="KW-0963">Cytoplasm</keyword>
<keyword id="KW-0238">DNA-binding</keyword>
<keyword id="KW-0804">Transcription</keyword>
<keyword id="KW-0805">Transcription regulation</keyword>